<reference key="1">
    <citation type="journal article" date="2005" name="BMC Genomics">
        <title>Bacterial genome adaptation to niches: divergence of the potential virulence genes in three Burkholderia species of different survival strategies.</title>
        <authorList>
            <person name="Kim H.S."/>
            <person name="Schell M.A."/>
            <person name="Yu Y."/>
            <person name="Ulrich R.L."/>
            <person name="Sarria S.H."/>
            <person name="Nierman W.C."/>
            <person name="DeShazer D."/>
        </authorList>
    </citation>
    <scope>NUCLEOTIDE SEQUENCE [LARGE SCALE GENOMIC DNA]</scope>
    <source>
        <strain>ATCC 700388 / DSM 13276 / CCUG 48851 / CIP 106301 / E264</strain>
    </source>
</reference>
<organism>
    <name type="scientific">Burkholderia thailandensis (strain ATCC 700388 / DSM 13276 / CCUG 48851 / CIP 106301 / E264)</name>
    <dbReference type="NCBI Taxonomy" id="271848"/>
    <lineage>
        <taxon>Bacteria</taxon>
        <taxon>Pseudomonadati</taxon>
        <taxon>Pseudomonadota</taxon>
        <taxon>Betaproteobacteria</taxon>
        <taxon>Burkholderiales</taxon>
        <taxon>Burkholderiaceae</taxon>
        <taxon>Burkholderia</taxon>
        <taxon>pseudomallei group</taxon>
    </lineage>
</organism>
<gene>
    <name evidence="1" type="primary">atpA1</name>
    <name type="synonym">atpA-1</name>
    <name type="ordered locus">BTH_I3310</name>
</gene>
<dbReference type="EC" id="7.1.2.2" evidence="1"/>
<dbReference type="EMBL" id="CP000086">
    <property type="protein sequence ID" value="ABC37514.1"/>
    <property type="molecule type" value="Genomic_DNA"/>
</dbReference>
<dbReference type="SMR" id="Q2STE7"/>
<dbReference type="GeneID" id="45122979"/>
<dbReference type="KEGG" id="bte:BTH_I3310"/>
<dbReference type="HOGENOM" id="CLU_010091_2_1_4"/>
<dbReference type="Proteomes" id="UP000001930">
    <property type="component" value="Chromosome I"/>
</dbReference>
<dbReference type="GO" id="GO:0005886">
    <property type="term" value="C:plasma membrane"/>
    <property type="evidence" value="ECO:0007669"/>
    <property type="project" value="UniProtKB-SubCell"/>
</dbReference>
<dbReference type="GO" id="GO:0045259">
    <property type="term" value="C:proton-transporting ATP synthase complex"/>
    <property type="evidence" value="ECO:0007669"/>
    <property type="project" value="UniProtKB-KW"/>
</dbReference>
<dbReference type="GO" id="GO:0043531">
    <property type="term" value="F:ADP binding"/>
    <property type="evidence" value="ECO:0007669"/>
    <property type="project" value="TreeGrafter"/>
</dbReference>
<dbReference type="GO" id="GO:0005524">
    <property type="term" value="F:ATP binding"/>
    <property type="evidence" value="ECO:0007669"/>
    <property type="project" value="UniProtKB-UniRule"/>
</dbReference>
<dbReference type="GO" id="GO:0046933">
    <property type="term" value="F:proton-transporting ATP synthase activity, rotational mechanism"/>
    <property type="evidence" value="ECO:0007669"/>
    <property type="project" value="UniProtKB-UniRule"/>
</dbReference>
<dbReference type="CDD" id="cd18113">
    <property type="entry name" value="ATP-synt_F1_alpha_C"/>
    <property type="match status" value="1"/>
</dbReference>
<dbReference type="CDD" id="cd18116">
    <property type="entry name" value="ATP-synt_F1_alpha_N"/>
    <property type="match status" value="1"/>
</dbReference>
<dbReference type="CDD" id="cd01132">
    <property type="entry name" value="F1-ATPase_alpha_CD"/>
    <property type="match status" value="1"/>
</dbReference>
<dbReference type="FunFam" id="1.20.150.20:FF:000001">
    <property type="entry name" value="ATP synthase subunit alpha"/>
    <property type="match status" value="1"/>
</dbReference>
<dbReference type="FunFam" id="2.40.30.20:FF:000001">
    <property type="entry name" value="ATP synthase subunit alpha"/>
    <property type="match status" value="1"/>
</dbReference>
<dbReference type="FunFam" id="3.40.50.300:FF:000002">
    <property type="entry name" value="ATP synthase subunit alpha"/>
    <property type="match status" value="1"/>
</dbReference>
<dbReference type="Gene3D" id="2.40.30.20">
    <property type="match status" value="1"/>
</dbReference>
<dbReference type="Gene3D" id="1.20.150.20">
    <property type="entry name" value="ATP synthase alpha/beta chain, C-terminal domain"/>
    <property type="match status" value="1"/>
</dbReference>
<dbReference type="Gene3D" id="3.40.50.300">
    <property type="entry name" value="P-loop containing nucleotide triphosphate hydrolases"/>
    <property type="match status" value="1"/>
</dbReference>
<dbReference type="HAMAP" id="MF_01346">
    <property type="entry name" value="ATP_synth_alpha_bact"/>
    <property type="match status" value="1"/>
</dbReference>
<dbReference type="InterPro" id="IPR023366">
    <property type="entry name" value="ATP_synth_asu-like_sf"/>
</dbReference>
<dbReference type="InterPro" id="IPR000793">
    <property type="entry name" value="ATP_synth_asu_C"/>
</dbReference>
<dbReference type="InterPro" id="IPR038376">
    <property type="entry name" value="ATP_synth_asu_C_sf"/>
</dbReference>
<dbReference type="InterPro" id="IPR033732">
    <property type="entry name" value="ATP_synth_F1_a_nt-bd_dom"/>
</dbReference>
<dbReference type="InterPro" id="IPR005294">
    <property type="entry name" value="ATP_synth_F1_asu"/>
</dbReference>
<dbReference type="InterPro" id="IPR020003">
    <property type="entry name" value="ATPase_a/bsu_AS"/>
</dbReference>
<dbReference type="InterPro" id="IPR004100">
    <property type="entry name" value="ATPase_F1/V1/A1_a/bsu_N"/>
</dbReference>
<dbReference type="InterPro" id="IPR036121">
    <property type="entry name" value="ATPase_F1/V1/A1_a/bsu_N_sf"/>
</dbReference>
<dbReference type="InterPro" id="IPR000194">
    <property type="entry name" value="ATPase_F1/V1/A1_a/bsu_nucl-bd"/>
</dbReference>
<dbReference type="InterPro" id="IPR027417">
    <property type="entry name" value="P-loop_NTPase"/>
</dbReference>
<dbReference type="NCBIfam" id="TIGR00962">
    <property type="entry name" value="atpA"/>
    <property type="match status" value="1"/>
</dbReference>
<dbReference type="NCBIfam" id="NF009884">
    <property type="entry name" value="PRK13343.1"/>
    <property type="match status" value="1"/>
</dbReference>
<dbReference type="PANTHER" id="PTHR48082">
    <property type="entry name" value="ATP SYNTHASE SUBUNIT ALPHA, MITOCHONDRIAL"/>
    <property type="match status" value="1"/>
</dbReference>
<dbReference type="PANTHER" id="PTHR48082:SF2">
    <property type="entry name" value="ATP SYNTHASE SUBUNIT ALPHA, MITOCHONDRIAL"/>
    <property type="match status" value="1"/>
</dbReference>
<dbReference type="Pfam" id="PF00006">
    <property type="entry name" value="ATP-synt_ab"/>
    <property type="match status" value="1"/>
</dbReference>
<dbReference type="Pfam" id="PF00306">
    <property type="entry name" value="ATP-synt_ab_C"/>
    <property type="match status" value="1"/>
</dbReference>
<dbReference type="Pfam" id="PF02874">
    <property type="entry name" value="ATP-synt_ab_N"/>
    <property type="match status" value="1"/>
</dbReference>
<dbReference type="PIRSF" id="PIRSF039088">
    <property type="entry name" value="F_ATPase_subunit_alpha"/>
    <property type="match status" value="1"/>
</dbReference>
<dbReference type="SUPFAM" id="SSF47917">
    <property type="entry name" value="C-terminal domain of alpha and beta subunits of F1 ATP synthase"/>
    <property type="match status" value="1"/>
</dbReference>
<dbReference type="SUPFAM" id="SSF50615">
    <property type="entry name" value="N-terminal domain of alpha and beta subunits of F1 ATP synthase"/>
    <property type="match status" value="1"/>
</dbReference>
<dbReference type="SUPFAM" id="SSF52540">
    <property type="entry name" value="P-loop containing nucleoside triphosphate hydrolases"/>
    <property type="match status" value="1"/>
</dbReference>
<dbReference type="PROSITE" id="PS00152">
    <property type="entry name" value="ATPASE_ALPHA_BETA"/>
    <property type="match status" value="1"/>
</dbReference>
<keyword id="KW-0066">ATP synthesis</keyword>
<keyword id="KW-0067">ATP-binding</keyword>
<keyword id="KW-0997">Cell inner membrane</keyword>
<keyword id="KW-1003">Cell membrane</keyword>
<keyword id="KW-0139">CF(1)</keyword>
<keyword id="KW-0375">Hydrogen ion transport</keyword>
<keyword id="KW-0406">Ion transport</keyword>
<keyword id="KW-0472">Membrane</keyword>
<keyword id="KW-0547">Nucleotide-binding</keyword>
<keyword id="KW-1278">Translocase</keyword>
<keyword id="KW-0813">Transport</keyword>
<evidence type="ECO:0000255" key="1">
    <source>
        <dbReference type="HAMAP-Rule" id="MF_01346"/>
    </source>
</evidence>
<name>ATPA1_BURTA</name>
<feature type="chain" id="PRO_0000238224" description="ATP synthase subunit alpha 1">
    <location>
        <begin position="1"/>
        <end position="513"/>
    </location>
</feature>
<feature type="binding site" evidence="1">
    <location>
        <begin position="169"/>
        <end position="176"/>
    </location>
    <ligand>
        <name>ATP</name>
        <dbReference type="ChEBI" id="CHEBI:30616"/>
    </ligand>
</feature>
<feature type="site" description="Required for activity" evidence="1">
    <location>
        <position position="373"/>
    </location>
</feature>
<protein>
    <recommendedName>
        <fullName evidence="1">ATP synthase subunit alpha 1</fullName>
        <ecNumber evidence="1">7.1.2.2</ecNumber>
    </recommendedName>
    <alternativeName>
        <fullName evidence="1">ATP synthase F1 sector subunit alpha 1</fullName>
    </alternativeName>
    <alternativeName>
        <fullName evidence="1">F-ATPase subunit alpha 1</fullName>
    </alternativeName>
</protein>
<proteinExistence type="inferred from homology"/>
<accession>Q2STE7</accession>
<sequence length="513" mass="55912">MQLNPSEISELIKSRIQGLEASADVRNQGTVISVTDGIVRIHGLSDVMQGEMLEFPGNTFGLALNLERDSVGAVILGEYEHISEGDIVKTTGRILEVPVGPELVGRVVDALGNPIDGKGPVNAKLTDAIEKIAPGVIWRKSVSQPVQTGLKSIDSMVPIGRGQRELIIGDRQCGKTAVAIDTIINQKGKDLICIYVAIGQKASSIMNVVRKLEETGALEYTIVVAASASESAAMQYLAPYAGCTMGEYFRDRGQDALIIYDDLTKQAWAYRQISLLLRRPPGREAYPGDVFYLHSRLLERAARVSEEYVEKFTNGEVKGKSGSLTALPVIETQAGDVTAFVPTNVISITDGQIFLETDLFNAGIRPAINAGVSVSRVGGAAQTKVVKKLSGGIRTDLAQYRELAAFAQFASDLDEATRKQLERGRRVTELLKQPQYQPLQVWELAVSLFSANNGYLDDLDVKDVLPFEKGLREYLKTSHADLIKRIEDTKDLSKDDESALHAAIKDFKKSGAY</sequence>
<comment type="function">
    <text evidence="1">Produces ATP from ADP in the presence of a proton gradient across the membrane. The alpha chain is a regulatory subunit.</text>
</comment>
<comment type="catalytic activity">
    <reaction evidence="1">
        <text>ATP + H2O + 4 H(+)(in) = ADP + phosphate + 5 H(+)(out)</text>
        <dbReference type="Rhea" id="RHEA:57720"/>
        <dbReference type="ChEBI" id="CHEBI:15377"/>
        <dbReference type="ChEBI" id="CHEBI:15378"/>
        <dbReference type="ChEBI" id="CHEBI:30616"/>
        <dbReference type="ChEBI" id="CHEBI:43474"/>
        <dbReference type="ChEBI" id="CHEBI:456216"/>
        <dbReference type="EC" id="7.1.2.2"/>
    </reaction>
</comment>
<comment type="subunit">
    <text evidence="1">F-type ATPases have 2 components, CF(1) - the catalytic core - and CF(0) - the membrane proton channel. CF(1) has five subunits: alpha(3), beta(3), gamma(1), delta(1), epsilon(1). CF(0) has three main subunits: a(1), b(2) and c(9-12). The alpha and beta chains form an alternating ring which encloses part of the gamma chain. CF(1) is attached to CF(0) by a central stalk formed by the gamma and epsilon chains, while a peripheral stalk is formed by the delta and b chains.</text>
</comment>
<comment type="subcellular location">
    <subcellularLocation>
        <location evidence="1">Cell inner membrane</location>
        <topology evidence="1">Peripheral membrane protein</topology>
    </subcellularLocation>
</comment>
<comment type="similarity">
    <text evidence="1">Belongs to the ATPase alpha/beta chains family.</text>
</comment>